<organism>
    <name type="scientific">Rhodococcus hoagii (strain 103S)</name>
    <name type="common">Rhodococcus equi</name>
    <dbReference type="NCBI Taxonomy" id="685727"/>
    <lineage>
        <taxon>Bacteria</taxon>
        <taxon>Bacillati</taxon>
        <taxon>Actinomycetota</taxon>
        <taxon>Actinomycetes</taxon>
        <taxon>Mycobacteriales</taxon>
        <taxon>Nocardiaceae</taxon>
        <taxon>Prescottella</taxon>
    </lineage>
</organism>
<comment type="function">
    <text evidence="1">Catalyzes the coenzyme F420-dependent oxidation of glucose 6-phosphate (G6P) to 6-phosphogluconolactone.</text>
</comment>
<comment type="catalytic activity">
    <reaction evidence="1">
        <text>oxidized coenzyme F420-(gamma-L-Glu)(n) + D-glucose 6-phosphate + H(+) = 6-phospho-D-glucono-1,5-lactone + reduced coenzyme F420-(gamma-L-Glu)(n)</text>
        <dbReference type="Rhea" id="RHEA:27294"/>
        <dbReference type="Rhea" id="RHEA-COMP:12939"/>
        <dbReference type="Rhea" id="RHEA-COMP:14378"/>
        <dbReference type="ChEBI" id="CHEBI:15378"/>
        <dbReference type="ChEBI" id="CHEBI:57955"/>
        <dbReference type="ChEBI" id="CHEBI:61548"/>
        <dbReference type="ChEBI" id="CHEBI:133980"/>
        <dbReference type="ChEBI" id="CHEBI:139511"/>
        <dbReference type="EC" id="1.1.98.2"/>
    </reaction>
</comment>
<comment type="subunit">
    <text evidence="1">Homodimer.</text>
</comment>
<comment type="similarity">
    <text evidence="1">Belongs to the F420-dependent glucose-6-phosphate dehydrogenase family.</text>
</comment>
<proteinExistence type="inferred from homology"/>
<gene>
    <name evidence="1" type="primary">fgd</name>
    <name type="ordered locus">REQ_39220</name>
</gene>
<evidence type="ECO:0000255" key="1">
    <source>
        <dbReference type="HAMAP-Rule" id="MF_02123"/>
    </source>
</evidence>
<reference key="1">
    <citation type="journal article" date="2010" name="PLoS Genet.">
        <title>The genome of a pathogenic rhodococcus: cooptive virulence underpinned by key gene acquisitions.</title>
        <authorList>
            <person name="Letek M."/>
            <person name="Gonzalez P."/>
            <person name="Macarthur I."/>
            <person name="Rodriguez H."/>
            <person name="Freeman T.C."/>
            <person name="Valero-Rello A."/>
            <person name="Blanco M."/>
            <person name="Buckley T."/>
            <person name="Cherevach I."/>
            <person name="Fahey R."/>
            <person name="Hapeshi A."/>
            <person name="Holdstock J."/>
            <person name="Leadon D."/>
            <person name="Navas J."/>
            <person name="Ocampo A."/>
            <person name="Quail M.A."/>
            <person name="Sanders M."/>
            <person name="Scortti M.M."/>
            <person name="Prescott J.F."/>
            <person name="Fogarty U."/>
            <person name="Meijer W.G."/>
            <person name="Parkhill J."/>
            <person name="Bentley S.D."/>
            <person name="Vazquez-Boland J.A."/>
        </authorList>
    </citation>
    <scope>NUCLEOTIDE SEQUENCE [LARGE SCALE GENOMIC DNA]</scope>
    <source>
        <strain>103S</strain>
    </source>
</reference>
<accession>E4W8Y2</accession>
<keyword id="KW-0119">Carbohydrate metabolism</keyword>
<keyword id="KW-0560">Oxidoreductase</keyword>
<protein>
    <recommendedName>
        <fullName evidence="1">F420-dependent glucose-6-phosphate dehydrogenase</fullName>
        <shortName evidence="1">FGD</shortName>
        <shortName evidence="1">G6PD</shortName>
        <ecNumber evidence="1">1.1.98.2</ecNumber>
    </recommendedName>
</protein>
<feature type="chain" id="PRO_0000413599" description="F420-dependent glucose-6-phosphate dehydrogenase">
    <location>
        <begin position="1"/>
        <end position="337"/>
    </location>
</feature>
<feature type="active site" description="Proton donor" evidence="1">
    <location>
        <position position="41"/>
    </location>
</feature>
<feature type="active site" description="Proton acceptor" evidence="1">
    <location>
        <position position="110"/>
    </location>
</feature>
<feature type="binding site" evidence="1">
    <location>
        <position position="40"/>
    </location>
    <ligand>
        <name>coenzyme F420-(gamma-Glu)n</name>
        <dbReference type="ChEBI" id="CHEBI:133980"/>
    </ligand>
</feature>
<feature type="binding site" evidence="1">
    <location>
        <position position="77"/>
    </location>
    <ligand>
        <name>coenzyme F420-(gamma-Glu)n</name>
        <dbReference type="ChEBI" id="CHEBI:133980"/>
    </ligand>
</feature>
<feature type="binding site" evidence="1">
    <location>
        <begin position="108"/>
        <end position="109"/>
    </location>
    <ligand>
        <name>coenzyme F420-(gamma-Glu)n</name>
        <dbReference type="ChEBI" id="CHEBI:133980"/>
    </ligand>
</feature>
<feature type="binding site" evidence="1">
    <location>
        <position position="113"/>
    </location>
    <ligand>
        <name>coenzyme F420-(gamma-Glu)n</name>
        <dbReference type="ChEBI" id="CHEBI:133980"/>
    </ligand>
</feature>
<feature type="binding site" evidence="1">
    <location>
        <begin position="178"/>
        <end position="179"/>
    </location>
    <ligand>
        <name>coenzyme F420-(gamma-Glu)n</name>
        <dbReference type="ChEBI" id="CHEBI:133980"/>
    </ligand>
</feature>
<feature type="binding site" evidence="1">
    <location>
        <begin position="181"/>
        <end position="182"/>
    </location>
    <ligand>
        <name>coenzyme F420-(gamma-Glu)n</name>
        <dbReference type="ChEBI" id="CHEBI:133980"/>
    </ligand>
</feature>
<feature type="binding site" evidence="1">
    <location>
        <position position="196"/>
    </location>
    <ligand>
        <name>substrate</name>
    </ligand>
</feature>
<feature type="binding site" evidence="1">
    <location>
        <position position="199"/>
    </location>
    <ligand>
        <name>substrate</name>
    </ligand>
</feature>
<feature type="binding site" evidence="1">
    <location>
        <position position="260"/>
    </location>
    <ligand>
        <name>substrate</name>
    </ligand>
</feature>
<feature type="binding site" evidence="1">
    <location>
        <position position="284"/>
    </location>
    <ligand>
        <name>substrate</name>
    </ligand>
</feature>
<name>FGD_RHOH1</name>
<dbReference type="EC" id="1.1.98.2" evidence="1"/>
<dbReference type="EMBL" id="FN563149">
    <property type="protein sequence ID" value="CBH49907.1"/>
    <property type="molecule type" value="Genomic_DNA"/>
</dbReference>
<dbReference type="RefSeq" id="WP_005517853.1">
    <property type="nucleotide sequence ID" value="NZ_VEFT01000001.1"/>
</dbReference>
<dbReference type="SMR" id="E4W8Y2"/>
<dbReference type="GeneID" id="57579562"/>
<dbReference type="KEGG" id="req:REQ_39220"/>
<dbReference type="eggNOG" id="COG2141">
    <property type="taxonomic scope" value="Bacteria"/>
</dbReference>
<dbReference type="HOGENOM" id="CLU_027853_4_0_11"/>
<dbReference type="Proteomes" id="UP001154400">
    <property type="component" value="Chromosome"/>
</dbReference>
<dbReference type="GO" id="GO:0070967">
    <property type="term" value="F:coenzyme F420 binding"/>
    <property type="evidence" value="ECO:0007669"/>
    <property type="project" value="UniProtKB-UniRule"/>
</dbReference>
<dbReference type="GO" id="GO:0052749">
    <property type="term" value="F:glucose-6-phosphate dehydrogenase (coenzyme F420) activity"/>
    <property type="evidence" value="ECO:0007669"/>
    <property type="project" value="UniProtKB-EC"/>
</dbReference>
<dbReference type="GO" id="GO:0016705">
    <property type="term" value="F:oxidoreductase activity, acting on paired donors, with incorporation or reduction of molecular oxygen"/>
    <property type="evidence" value="ECO:0007669"/>
    <property type="project" value="InterPro"/>
</dbReference>
<dbReference type="GO" id="GO:0005975">
    <property type="term" value="P:carbohydrate metabolic process"/>
    <property type="evidence" value="ECO:0007669"/>
    <property type="project" value="UniProtKB-UniRule"/>
</dbReference>
<dbReference type="CDD" id="cd01097">
    <property type="entry name" value="Tetrahydromethanopterin_reductase"/>
    <property type="match status" value="1"/>
</dbReference>
<dbReference type="Gene3D" id="3.20.20.30">
    <property type="entry name" value="Luciferase-like domain"/>
    <property type="match status" value="1"/>
</dbReference>
<dbReference type="HAMAP" id="MF_02123">
    <property type="entry name" value="F420_G6P_DH"/>
    <property type="match status" value="1"/>
</dbReference>
<dbReference type="InterPro" id="IPR019944">
    <property type="entry name" value="F420-dep_G6P_DH"/>
</dbReference>
<dbReference type="InterPro" id="IPR050564">
    <property type="entry name" value="F420-G6PD/mer"/>
</dbReference>
<dbReference type="InterPro" id="IPR019945">
    <property type="entry name" value="F420_G6P_DH-rel"/>
</dbReference>
<dbReference type="InterPro" id="IPR011251">
    <property type="entry name" value="Luciferase-like_dom"/>
</dbReference>
<dbReference type="InterPro" id="IPR036661">
    <property type="entry name" value="Luciferase-like_sf"/>
</dbReference>
<dbReference type="NCBIfam" id="TIGR03554">
    <property type="entry name" value="F420_G6P_DH"/>
    <property type="match status" value="1"/>
</dbReference>
<dbReference type="NCBIfam" id="TIGR03557">
    <property type="entry name" value="F420_G6P_family"/>
    <property type="match status" value="1"/>
</dbReference>
<dbReference type="PANTHER" id="PTHR43244">
    <property type="match status" value="1"/>
</dbReference>
<dbReference type="PANTHER" id="PTHR43244:SF1">
    <property type="entry name" value="5,10-METHYLENETETRAHYDROMETHANOPTERIN REDUCTASE"/>
    <property type="match status" value="1"/>
</dbReference>
<dbReference type="Pfam" id="PF00296">
    <property type="entry name" value="Bac_luciferase"/>
    <property type="match status" value="1"/>
</dbReference>
<dbReference type="SUPFAM" id="SSF51679">
    <property type="entry name" value="Bacterial luciferase-like"/>
    <property type="match status" value="1"/>
</dbReference>
<sequence>MVQGLKLGLKASAEQFGPRDLVELGVMAEEHGLDSVTVSDHFQPWRHNGGHAPFSIAWMTAVGERTQRLQLGTSVMTPTFRYNPAVVAQAFATMGCLYPGRVMLGVGTGEALNEIATGFKGEWPEFKERFARLRESVQLMRDLWTGDRVDFEGEYYSTKGASIYDVPEGGIPVYIAAGGPVVARYAGRAGEGFICTSGKGMDLYTEKLIPAVKEGAEKAARNFADIDRMIEIKISYDTDPAAALENTRFWAPLSLTAEQKHSIDDPIEMEAAADALPIEQVAKRWIVSSDPDEAVEMIKPYLDAGLNHLVFHAPGHDQKRFLDLFERDLAPRLRALA</sequence>